<accession>Q5FMC0</accession>
<sequence>MKYAEKSPALWDAIRQEEKRQQNTIELIASENIVSDAVREAQGSVLTNKYAEGYPGRRYYGGCQYIDQVEQLAIDYAKKLFNAKFANVQPHSGSQANMAVYQALLKPGDVILGMGMDAGGHLTHGAKVNFSGKEYKSYEYGLNVETEELDFDQIRKVALEVKPKLIVAGASAYSRIIDWQKFRDIADEVGAYLMVDMAHIAGLVATDQHPSPIPVADIVTTTTHKTLRGPRGGMILSNNLEIGKKINSALFPGIQGGPLEHVIAGKAQAFYEDLQPQFTDYIKQVVKNAKAMAEVFDESENIRVVSGGTDNHLMIIDITDTGLTGKDAQNLLDFVNITTNKESIPGDKRSPFITSGLRIGTPAITSRGFNEEDARKTASLIIEILSDPDNEATIEHVKKEVHELTKKHPVE</sequence>
<reference key="1">
    <citation type="journal article" date="2005" name="Proc. Natl. Acad. Sci. U.S.A.">
        <title>Complete genome sequence of the probiotic lactic acid bacterium Lactobacillus acidophilus NCFM.</title>
        <authorList>
            <person name="Altermann E."/>
            <person name="Russell W.M."/>
            <person name="Azcarate-Peril M.A."/>
            <person name="Barrangou R."/>
            <person name="Buck B.L."/>
            <person name="McAuliffe O."/>
            <person name="Souther N."/>
            <person name="Dobson A."/>
            <person name="Duong T."/>
            <person name="Callanan M."/>
            <person name="Lick S."/>
            <person name="Hamrick A."/>
            <person name="Cano R."/>
            <person name="Klaenhammer T.R."/>
        </authorList>
    </citation>
    <scope>NUCLEOTIDE SEQUENCE [LARGE SCALE GENOMIC DNA]</scope>
    <source>
        <strain>ATCC 700396 / NCK56 / N2 / NCFM</strain>
    </source>
</reference>
<proteinExistence type="inferred from homology"/>
<gene>
    <name evidence="1" type="primary">glyA</name>
    <name type="ordered locus">LBA0261</name>
</gene>
<name>GLYA_LACAC</name>
<dbReference type="EC" id="2.1.2.1" evidence="1"/>
<dbReference type="EMBL" id="CP000033">
    <property type="protein sequence ID" value="AAV42154.1"/>
    <property type="molecule type" value="Genomic_DNA"/>
</dbReference>
<dbReference type="RefSeq" id="WP_003548972.1">
    <property type="nucleotide sequence ID" value="NC_006814.3"/>
</dbReference>
<dbReference type="RefSeq" id="YP_193185.1">
    <property type="nucleotide sequence ID" value="NC_006814.3"/>
</dbReference>
<dbReference type="SMR" id="Q5FMC0"/>
<dbReference type="STRING" id="272621.LBA0261"/>
<dbReference type="GeneID" id="93290634"/>
<dbReference type="KEGG" id="lac:LBA0261"/>
<dbReference type="PATRIC" id="fig|272621.13.peg.246"/>
<dbReference type="eggNOG" id="COG0112">
    <property type="taxonomic scope" value="Bacteria"/>
</dbReference>
<dbReference type="HOGENOM" id="CLU_022477_2_1_9"/>
<dbReference type="OrthoDB" id="9803846at2"/>
<dbReference type="BioCyc" id="LACI272621:G1G49-252-MONOMER"/>
<dbReference type="UniPathway" id="UPA00193"/>
<dbReference type="UniPathway" id="UPA00288">
    <property type="reaction ID" value="UER01023"/>
</dbReference>
<dbReference type="Proteomes" id="UP000006381">
    <property type="component" value="Chromosome"/>
</dbReference>
<dbReference type="GO" id="GO:0005829">
    <property type="term" value="C:cytosol"/>
    <property type="evidence" value="ECO:0007669"/>
    <property type="project" value="TreeGrafter"/>
</dbReference>
<dbReference type="GO" id="GO:0004372">
    <property type="term" value="F:glycine hydroxymethyltransferase activity"/>
    <property type="evidence" value="ECO:0007669"/>
    <property type="project" value="UniProtKB-UniRule"/>
</dbReference>
<dbReference type="GO" id="GO:0030170">
    <property type="term" value="F:pyridoxal phosphate binding"/>
    <property type="evidence" value="ECO:0007669"/>
    <property type="project" value="UniProtKB-UniRule"/>
</dbReference>
<dbReference type="GO" id="GO:0019264">
    <property type="term" value="P:glycine biosynthetic process from serine"/>
    <property type="evidence" value="ECO:0007669"/>
    <property type="project" value="UniProtKB-UniRule"/>
</dbReference>
<dbReference type="GO" id="GO:0035999">
    <property type="term" value="P:tetrahydrofolate interconversion"/>
    <property type="evidence" value="ECO:0007669"/>
    <property type="project" value="UniProtKB-UniRule"/>
</dbReference>
<dbReference type="CDD" id="cd00378">
    <property type="entry name" value="SHMT"/>
    <property type="match status" value="1"/>
</dbReference>
<dbReference type="FunFam" id="3.40.640.10:FF:000001">
    <property type="entry name" value="Serine hydroxymethyltransferase"/>
    <property type="match status" value="1"/>
</dbReference>
<dbReference type="Gene3D" id="3.90.1150.10">
    <property type="entry name" value="Aspartate Aminotransferase, domain 1"/>
    <property type="match status" value="1"/>
</dbReference>
<dbReference type="Gene3D" id="3.40.640.10">
    <property type="entry name" value="Type I PLP-dependent aspartate aminotransferase-like (Major domain)"/>
    <property type="match status" value="1"/>
</dbReference>
<dbReference type="HAMAP" id="MF_00051">
    <property type="entry name" value="SHMT"/>
    <property type="match status" value="1"/>
</dbReference>
<dbReference type="InterPro" id="IPR015424">
    <property type="entry name" value="PyrdxlP-dep_Trfase"/>
</dbReference>
<dbReference type="InterPro" id="IPR015421">
    <property type="entry name" value="PyrdxlP-dep_Trfase_major"/>
</dbReference>
<dbReference type="InterPro" id="IPR015422">
    <property type="entry name" value="PyrdxlP-dep_Trfase_small"/>
</dbReference>
<dbReference type="InterPro" id="IPR001085">
    <property type="entry name" value="Ser_HO-MeTrfase"/>
</dbReference>
<dbReference type="InterPro" id="IPR049943">
    <property type="entry name" value="Ser_HO-MeTrfase-like"/>
</dbReference>
<dbReference type="InterPro" id="IPR019798">
    <property type="entry name" value="Ser_HO-MeTrfase_PLP_BS"/>
</dbReference>
<dbReference type="InterPro" id="IPR039429">
    <property type="entry name" value="SHMT-like_dom"/>
</dbReference>
<dbReference type="NCBIfam" id="NF000586">
    <property type="entry name" value="PRK00011.1"/>
    <property type="match status" value="1"/>
</dbReference>
<dbReference type="PANTHER" id="PTHR11680">
    <property type="entry name" value="SERINE HYDROXYMETHYLTRANSFERASE"/>
    <property type="match status" value="1"/>
</dbReference>
<dbReference type="PANTHER" id="PTHR11680:SF35">
    <property type="entry name" value="SERINE HYDROXYMETHYLTRANSFERASE 1"/>
    <property type="match status" value="1"/>
</dbReference>
<dbReference type="Pfam" id="PF00464">
    <property type="entry name" value="SHMT"/>
    <property type="match status" value="1"/>
</dbReference>
<dbReference type="PIRSF" id="PIRSF000412">
    <property type="entry name" value="SHMT"/>
    <property type="match status" value="1"/>
</dbReference>
<dbReference type="SUPFAM" id="SSF53383">
    <property type="entry name" value="PLP-dependent transferases"/>
    <property type="match status" value="1"/>
</dbReference>
<dbReference type="PROSITE" id="PS00096">
    <property type="entry name" value="SHMT"/>
    <property type="match status" value="1"/>
</dbReference>
<evidence type="ECO:0000255" key="1">
    <source>
        <dbReference type="HAMAP-Rule" id="MF_00051"/>
    </source>
</evidence>
<comment type="function">
    <text evidence="1">Catalyzes the reversible interconversion of serine and glycine with tetrahydrofolate (THF) serving as the one-carbon carrier. This reaction serves as the major source of one-carbon groups required for the biosynthesis of purines, thymidylate, methionine, and other important biomolecules. Also exhibits THF-independent aldolase activity toward beta-hydroxyamino acids, producing glycine and aldehydes, via a retro-aldol mechanism.</text>
</comment>
<comment type="catalytic activity">
    <reaction evidence="1">
        <text>(6R)-5,10-methylene-5,6,7,8-tetrahydrofolate + glycine + H2O = (6S)-5,6,7,8-tetrahydrofolate + L-serine</text>
        <dbReference type="Rhea" id="RHEA:15481"/>
        <dbReference type="ChEBI" id="CHEBI:15377"/>
        <dbReference type="ChEBI" id="CHEBI:15636"/>
        <dbReference type="ChEBI" id="CHEBI:33384"/>
        <dbReference type="ChEBI" id="CHEBI:57305"/>
        <dbReference type="ChEBI" id="CHEBI:57453"/>
        <dbReference type="EC" id="2.1.2.1"/>
    </reaction>
</comment>
<comment type="cofactor">
    <cofactor evidence="1">
        <name>pyridoxal 5'-phosphate</name>
        <dbReference type="ChEBI" id="CHEBI:597326"/>
    </cofactor>
</comment>
<comment type="pathway">
    <text evidence="1">One-carbon metabolism; tetrahydrofolate interconversion.</text>
</comment>
<comment type="pathway">
    <text evidence="1">Amino-acid biosynthesis; glycine biosynthesis; glycine from L-serine: step 1/1.</text>
</comment>
<comment type="subunit">
    <text evidence="1">Homodimer.</text>
</comment>
<comment type="subcellular location">
    <subcellularLocation>
        <location evidence="1">Cytoplasm</location>
    </subcellularLocation>
</comment>
<comment type="similarity">
    <text evidence="1">Belongs to the SHMT family.</text>
</comment>
<protein>
    <recommendedName>
        <fullName evidence="1">Serine hydroxymethyltransferase</fullName>
        <shortName evidence="1">SHMT</shortName>
        <shortName evidence="1">Serine methylase</shortName>
        <ecNumber evidence="1">2.1.2.1</ecNumber>
    </recommendedName>
</protein>
<keyword id="KW-0028">Amino-acid biosynthesis</keyword>
<keyword id="KW-0963">Cytoplasm</keyword>
<keyword id="KW-0554">One-carbon metabolism</keyword>
<keyword id="KW-0663">Pyridoxal phosphate</keyword>
<keyword id="KW-1185">Reference proteome</keyword>
<keyword id="KW-0808">Transferase</keyword>
<organism>
    <name type="scientific">Lactobacillus acidophilus (strain ATCC 700396 / NCK56 / N2 / NCFM)</name>
    <dbReference type="NCBI Taxonomy" id="272621"/>
    <lineage>
        <taxon>Bacteria</taxon>
        <taxon>Bacillati</taxon>
        <taxon>Bacillota</taxon>
        <taxon>Bacilli</taxon>
        <taxon>Lactobacillales</taxon>
        <taxon>Lactobacillaceae</taxon>
        <taxon>Lactobacillus</taxon>
    </lineage>
</organism>
<feature type="chain" id="PRO_0000234983" description="Serine hydroxymethyltransferase">
    <location>
        <begin position="1"/>
        <end position="411"/>
    </location>
</feature>
<feature type="binding site" evidence="1">
    <location>
        <begin position="120"/>
        <end position="122"/>
    </location>
    <ligand>
        <name>(6S)-5,6,7,8-tetrahydrofolate</name>
        <dbReference type="ChEBI" id="CHEBI:57453"/>
    </ligand>
</feature>
<feature type="binding site" evidence="1">
    <location>
        <begin position="350"/>
        <end position="352"/>
    </location>
    <ligand>
        <name>(6S)-5,6,7,8-tetrahydrofolate</name>
        <dbReference type="ChEBI" id="CHEBI:57453"/>
    </ligand>
</feature>
<feature type="site" description="Plays an important role in substrate specificity" evidence="1">
    <location>
        <position position="224"/>
    </location>
</feature>
<feature type="modified residue" description="N6-(pyridoxal phosphate)lysine" evidence="1">
    <location>
        <position position="225"/>
    </location>
</feature>